<gene>
    <name evidence="1" type="primary">env</name>
</gene>
<keyword id="KW-0014">AIDS</keyword>
<keyword id="KW-0053">Apoptosis</keyword>
<keyword id="KW-1165">Clathrin-mediated endocytosis of virus by host</keyword>
<keyword id="KW-0165">Cleavage on pair of basic residues</keyword>
<keyword id="KW-0175">Coiled coil</keyword>
<keyword id="KW-0903">Direct protein sequencing</keyword>
<keyword id="KW-1015">Disulfide bond</keyword>
<keyword id="KW-1170">Fusion of virus membrane with host endosomal membrane</keyword>
<keyword id="KW-1168">Fusion of virus membrane with host membrane</keyword>
<keyword id="KW-0325">Glycoprotein</keyword>
<keyword id="KW-1032">Host cell membrane</keyword>
<keyword id="KW-1039">Host endosome</keyword>
<keyword id="KW-1043">Host membrane</keyword>
<keyword id="KW-0945">Host-virus interaction</keyword>
<keyword id="KW-0449">Lipoprotein</keyword>
<keyword id="KW-0472">Membrane</keyword>
<keyword id="KW-0564">Palmitate</keyword>
<keyword id="KW-0732">Signal</keyword>
<keyword id="KW-0812">Transmembrane</keyword>
<keyword id="KW-1133">Transmembrane helix</keyword>
<keyword id="KW-1161">Viral attachment to host cell</keyword>
<keyword id="KW-0261">Viral envelope protein</keyword>
<keyword id="KW-0899">Viral immunoevasion</keyword>
<keyword id="KW-1162">Viral penetration into host cytoplasm</keyword>
<keyword id="KW-0946">Virion</keyword>
<keyword id="KW-1164">Virus endocytosis by host</keyword>
<keyword id="KW-1160">Virus entry into host cell</keyword>
<accession>P05879</accession>
<dbReference type="EMBL" id="AH002346">
    <property type="protein sequence ID" value="AAA44311.1"/>
    <property type="molecule type" value="Genomic_RNA"/>
</dbReference>
<dbReference type="PIR" id="C25523">
    <property type="entry name" value="VCLJH4"/>
</dbReference>
<dbReference type="SMR" id="P05879"/>
<dbReference type="GlyCosmos" id="P05879">
    <property type="glycosylation" value="30 sites, No reported glycans"/>
</dbReference>
<dbReference type="Reactome" id="R-HSA-5621480">
    <property type="pathway name" value="Dectin-2 family"/>
</dbReference>
<dbReference type="PRO" id="PR:P05879"/>
<dbReference type="GO" id="GO:0044175">
    <property type="term" value="C:host cell endosome membrane"/>
    <property type="evidence" value="ECO:0007669"/>
    <property type="project" value="UniProtKB-SubCell"/>
</dbReference>
<dbReference type="GO" id="GO:0020002">
    <property type="term" value="C:host cell plasma membrane"/>
    <property type="evidence" value="ECO:0007669"/>
    <property type="project" value="UniProtKB-SubCell"/>
</dbReference>
<dbReference type="GO" id="GO:0016020">
    <property type="term" value="C:membrane"/>
    <property type="evidence" value="ECO:0007669"/>
    <property type="project" value="UniProtKB-UniRule"/>
</dbReference>
<dbReference type="GO" id="GO:0019031">
    <property type="term" value="C:viral envelope"/>
    <property type="evidence" value="ECO:0007669"/>
    <property type="project" value="UniProtKB-KW"/>
</dbReference>
<dbReference type="GO" id="GO:0055036">
    <property type="term" value="C:virion membrane"/>
    <property type="evidence" value="ECO:0007669"/>
    <property type="project" value="UniProtKB-SubCell"/>
</dbReference>
<dbReference type="GO" id="GO:0005198">
    <property type="term" value="F:structural molecule activity"/>
    <property type="evidence" value="ECO:0007669"/>
    <property type="project" value="UniProtKB-UniRule"/>
</dbReference>
<dbReference type="GO" id="GO:0075512">
    <property type="term" value="P:clathrin-dependent endocytosis of virus by host cell"/>
    <property type="evidence" value="ECO:0007669"/>
    <property type="project" value="UniProtKB-UniRule"/>
</dbReference>
<dbReference type="GO" id="GO:0039654">
    <property type="term" value="P:fusion of virus membrane with host endosome membrane"/>
    <property type="evidence" value="ECO:0007669"/>
    <property type="project" value="UniProtKB-UniRule"/>
</dbReference>
<dbReference type="GO" id="GO:0019064">
    <property type="term" value="P:fusion of virus membrane with host plasma membrane"/>
    <property type="evidence" value="ECO:0007669"/>
    <property type="project" value="UniProtKB-UniRule"/>
</dbReference>
<dbReference type="GO" id="GO:1903908">
    <property type="term" value="P:positive regulation of plasma membrane raft polarization"/>
    <property type="evidence" value="ECO:0007669"/>
    <property type="project" value="UniProtKB-UniRule"/>
</dbReference>
<dbReference type="GO" id="GO:1903911">
    <property type="term" value="P:positive regulation of receptor clustering"/>
    <property type="evidence" value="ECO:0007669"/>
    <property type="project" value="UniProtKB-UniRule"/>
</dbReference>
<dbReference type="GO" id="GO:0019082">
    <property type="term" value="P:viral protein processing"/>
    <property type="evidence" value="ECO:0007669"/>
    <property type="project" value="UniProtKB-UniRule"/>
</dbReference>
<dbReference type="GO" id="GO:0019062">
    <property type="term" value="P:virion attachment to host cell"/>
    <property type="evidence" value="ECO:0007669"/>
    <property type="project" value="UniProtKB-UniRule"/>
</dbReference>
<dbReference type="CDD" id="cd09909">
    <property type="entry name" value="HIV-1-like_HR1-HR2"/>
    <property type="match status" value="1"/>
</dbReference>
<dbReference type="FunFam" id="1.10.287.210:FF:000001">
    <property type="entry name" value="Envelope glycoprotein gp160"/>
    <property type="match status" value="1"/>
</dbReference>
<dbReference type="FunFam" id="1.20.5.490:FF:000001">
    <property type="entry name" value="Envelope glycoprotein gp160"/>
    <property type="match status" value="1"/>
</dbReference>
<dbReference type="FunFam" id="2.170.40.20:FF:000001">
    <property type="entry name" value="Envelope glycoprotein gp160"/>
    <property type="match status" value="1"/>
</dbReference>
<dbReference type="FunFam" id="2.170.40.20:FF:000003">
    <property type="entry name" value="Envelope glycoprotein gp160"/>
    <property type="match status" value="1"/>
</dbReference>
<dbReference type="Gene3D" id="1.10.287.210">
    <property type="match status" value="1"/>
</dbReference>
<dbReference type="Gene3D" id="2.170.40.20">
    <property type="entry name" value="Human immunodeficiency virus 1, Gp160, envelope glycoprotein"/>
    <property type="match status" value="2"/>
</dbReference>
<dbReference type="Gene3D" id="1.20.5.490">
    <property type="entry name" value="Single helix bin"/>
    <property type="match status" value="1"/>
</dbReference>
<dbReference type="HAMAP" id="MF_04083">
    <property type="entry name" value="HIV_ENV"/>
    <property type="match status" value="1"/>
</dbReference>
<dbReference type="InterPro" id="IPR036377">
    <property type="entry name" value="Gp120_core_sf"/>
</dbReference>
<dbReference type="InterPro" id="IPR037527">
    <property type="entry name" value="Gp160"/>
</dbReference>
<dbReference type="InterPro" id="IPR000328">
    <property type="entry name" value="GP41-like"/>
</dbReference>
<dbReference type="InterPro" id="IPR000777">
    <property type="entry name" value="HIV1_Gp120"/>
</dbReference>
<dbReference type="Pfam" id="PF00516">
    <property type="entry name" value="GP120"/>
    <property type="match status" value="1"/>
</dbReference>
<dbReference type="Pfam" id="PF00517">
    <property type="entry name" value="GP41"/>
    <property type="match status" value="1"/>
</dbReference>
<dbReference type="SUPFAM" id="SSF56502">
    <property type="entry name" value="gp120 core"/>
    <property type="match status" value="2"/>
</dbReference>
<dbReference type="SUPFAM" id="SSF58069">
    <property type="entry name" value="Virus ectodomain"/>
    <property type="match status" value="1"/>
</dbReference>
<sequence>MAMRAKGIRKNCQHLWRWGTMLLGMLMICSAAANLWVTVYYGVPVWKEATTTLFCASDAKAYDTEAHNVWATHACVPTNPNPQEVVLENVTENFNMWKNNMVEQMHEDIISLWDQSLKPCVKLTPLCVTLNCTDLNTNNTTNTTELSIIVVWEQRGKGEMRNCSFNITTSIRDKVQREYALFYKLDVEPIDDNKNTTNNTKYRLINCNTSVITQACPKVSFEPIPIHYCTPTGFALLKCNDKKFNGTGPCTNVSTVQCTHGIRPVVSTQLLLNGSLAEEEVVIRSENFTNNAKTIIVQLNVSVEINCTRPNNHTRKRVTLGPGRVWYTTGEILGNIRQAHCNISRAQWNNTLQQIATTLREQFGNKTIAFNQSSGGDPEIVMHSFNCGGEFFYCNSTQLFNSAWNVTSNGTWSVTRKQKDTGDIITLPCRIKQIINRWQVVGKAMYALPIKGLIRCSSNITGLLLTRDGGGENQTTEIFRPGGGDMRDNWRSELYKYKVVKIEPLGVAPTKAKRRVVQREKRAVGMLGAMFLGFLGAAGSTMGATSMALTVQARQLLSGIVQQQNNLLRAIKAQQHLLQLTVWGIKQLQARILAVERYLKDQQLLGFWGCSGKLICTTAVPWNASWSNKTLDQIWNNMTWMEWDREIDNYTHLIYTLIEESQNQQEKNQQELLQLDKWASLWTWSDITKWLWYIKIFIMIVGGLIGLRIVFAVLSIVNRVRQGYSPLSFQTLLPNPRGPDRPEGTEEGGGERGRDGSTRLVHGFLALVWDDLRSLCLFSYHRLRDLLLIVARIVELLGRRGWEVLKYWWNLLQYWSQELKNSAVSLVNVTAIAVAEGTDRVIEVVQRIYRAFLHIPRRIRQGFERALL</sequence>
<organism>
    <name type="scientific">Human immunodeficiency virus type 1 group M subtype B (isolate CDC-451)</name>
    <name type="common">HIV-1</name>
    <dbReference type="NCBI Taxonomy" id="11687"/>
    <lineage>
        <taxon>Viruses</taxon>
        <taxon>Riboviria</taxon>
        <taxon>Pararnavirae</taxon>
        <taxon>Artverviricota</taxon>
        <taxon>Revtraviricetes</taxon>
        <taxon>Ortervirales</taxon>
        <taxon>Retroviridae</taxon>
        <taxon>Orthoretrovirinae</taxon>
        <taxon>Lentivirus</taxon>
        <taxon>Human immunodeficiency virus type 1</taxon>
    </lineage>
</organism>
<protein>
    <recommendedName>
        <fullName evidence="1">Envelope glycoprotein gp160</fullName>
    </recommendedName>
    <alternativeName>
        <fullName evidence="1">Env polyprotein</fullName>
    </alternativeName>
    <component>
        <recommendedName>
            <fullName evidence="1">Surface protein gp120</fullName>
            <shortName evidence="1">SU</shortName>
        </recommendedName>
        <alternativeName>
            <fullName evidence="1">Glycoprotein 120</fullName>
            <shortName evidence="1">gp120</shortName>
        </alternativeName>
    </component>
    <component>
        <recommendedName>
            <fullName evidence="1">Transmembrane protein gp41</fullName>
            <shortName evidence="1">TM</shortName>
        </recommendedName>
        <alternativeName>
            <fullName evidence="1">Glycoprotein 41</fullName>
            <shortName evidence="1">gp41</shortName>
        </alternativeName>
    </component>
</protein>
<comment type="function">
    <molecule>Envelope glycoprotein gp160</molecule>
    <text evidence="1">Oligomerizes in the host endoplasmic reticulum into predominantly trimers. In a second time, gp160 transits in the host Golgi, where glycosylation is completed. The precursor is then proteolytically cleaved in the trans-Golgi and thereby activated by cellular furin or furin-like proteases to produce gp120 and gp41.</text>
</comment>
<comment type="function">
    <molecule>Surface protein gp120</molecule>
    <text evidence="1">Attaches the virus to the host lymphoid cell by binding to the primary receptor CD4. This interaction induces a structural rearrangement creating a high affinity binding site for a chemokine coreceptor like CXCR4 and/or CCR5. Acts as a ligand for CD209/DC-SIGN and CLEC4M/DC-SIGNR, which are respectively found on dendritic cells (DCs), and on endothelial cells of liver sinusoids and lymph node sinuses. These interactions allow capture of viral particles at mucosal surfaces by these cells and subsequent transmission to permissive cells. HIV subverts the migration properties of dendritic cells to gain access to CD4+ T-cells in lymph nodes. Virus transmission to permissive T-cells occurs either in trans (without DCs infection, through viral capture and transmission), or in cis (following DCs productive infection, through the usual CD4-gp120 interaction), thereby inducing a robust infection. In trans infection, bound virions remain infectious over days and it is proposed that they are not degraded, but protected in non-lysosomal acidic organelles within the DCs close to the cell membrane thus contributing to the viral infectious potential during DCs' migration from the periphery to the lymphoid tissues. On arrival at lymphoid tissues, intact virions recycle back to DCs' cell surface allowing virus transmission to CD4+ T-cells.</text>
</comment>
<comment type="function">
    <molecule>Transmembrane protein gp41</molecule>
    <text evidence="1">Acts as a class I viral fusion protein. Under the current model, the protein has at least 3 conformational states: pre-fusion native state, pre-hairpin intermediate state, and post-fusion hairpin state. During fusion of viral and target intracellular membranes, the coiled coil regions (heptad repeats) assume a trimer-of-hairpins structure, positioning the fusion peptide in close proximity to the C-terminal region of the ectodomain. The formation of this structure appears to drive apposition and subsequent fusion of viral and target cell membranes. Complete fusion occurs in host cell endosomes and is dynamin-dependent, however some lipid transfer might occur at the plasma membrane. The virus undergoes clathrin-dependent internalization long before endosomal fusion, thus minimizing the surface exposure of conserved viral epitopes during fusion and reducing the efficacy of inhibitors targeting these epitopes. Membranes fusion leads to delivery of the nucleocapsid into the cytoplasm.</text>
</comment>
<comment type="subunit">
    <molecule>Surface protein gp120</molecule>
    <text evidence="1">The mature envelope protein (Env) consists of a homotrimer of non-covalently associated gp120-gp41 heterodimers. The resulting complex protrudes from the virus surface as a spike. There seems to be as few as 10 spikes on the average virion. Interacts with host CD4, CCR5 and CXCR4. Gp120 also interacts with the C-type lectins CD209/DC-SIGN and CLEC4M/DC-SIGNR (collectively referred to as DC-SIGN(R)). Gp120 and gp41 interact with GalCer. Gp120 interacts with host ITGA4/ITGB7 complex; on CD4+ T-cells, this interaction results in rapid activation of integrin ITGAL/LFA-1, which facilitates efficient cell-to-cell spreading of HIV-1. Gp120 interacts with cell-associated heparan sulfate; this interaction increases virus infectivity on permissive cells and may be involved in infection of CD4- cells.</text>
</comment>
<comment type="subunit">
    <molecule>Transmembrane protein gp41</molecule>
    <text evidence="1">The mature envelope protein (Env) consists of a homotrimer of non-covalently associated gp120-gp41 heterodimers. The resulting complex protrudes from the virus surface as a spike. There seems to be as few as 10 spikes on the average virion.</text>
</comment>
<comment type="subcellular location">
    <molecule>Surface protein gp120</molecule>
    <subcellularLocation>
        <location evidence="1">Virion membrane</location>
        <topology evidence="1">Peripheral membrane protein</topology>
    </subcellularLocation>
    <subcellularLocation>
        <location evidence="1">Host cell membrane</location>
        <topology evidence="1">Peripheral membrane protein</topology>
    </subcellularLocation>
    <subcellularLocation>
        <location evidence="1">Host endosome membrane</location>
        <topology evidence="1">Single-pass type I membrane protein</topology>
    </subcellularLocation>
    <text evidence="1">The surface protein is not anchored to the viral envelope, but associates with the extravirion surface through its binding to TM. It is probably concentrated at the site of budding and incorporated into the virions possibly by contacts between the cytoplasmic tail of Env and the N-terminus of Gag.</text>
</comment>
<comment type="subcellular location">
    <molecule>Transmembrane protein gp41</molecule>
    <subcellularLocation>
        <location evidence="1">Virion membrane</location>
        <topology evidence="1">Single-pass type I membrane protein</topology>
    </subcellularLocation>
    <subcellularLocation>
        <location evidence="1">Host cell membrane</location>
        <topology evidence="1">Single-pass type I membrane protein</topology>
    </subcellularLocation>
    <subcellularLocation>
        <location evidence="1">Host endosome membrane</location>
        <topology evidence="1">Single-pass type I membrane protein</topology>
    </subcellularLocation>
    <text evidence="1">It is probably concentrated at the site of budding and incorporated into the virions possibly by contacts between the cytoplasmic tail of Env and the N-terminus of Gag.</text>
</comment>
<comment type="domain">
    <text evidence="1">Some of the most genetically diverse regions of the viral genome are present in Env. They are called variable regions 1 through 5 (V1 through V5). Coreceptor usage of gp120 is determined mainly by the primary structure of the third variable region (V3) in the outer domain of gp120. The sequence of V3 determines which coreceptor, CCR5 and/or CXCR4 (corresponding to R5/macrophage, X4/T cell and R5X4/T cell and macrophage tropism), is used to trigger the fusion potential of the Env complex, and hence which cells the virus can infect. Binding to CCR5 involves a region adjacent in addition to V3.</text>
</comment>
<comment type="domain">
    <text evidence="1">The membrane proximal external region (MPER) present in gp41 is a tryptophan-rich region recognized by the antibodies 2F5, Z13, and 4E10. MPER seems to play a role in fusion.</text>
</comment>
<comment type="domain">
    <text evidence="1">The 17 amino acids long immunosuppressive region is present in many retroviral envelope proteins. Synthetic peptides derived from this relatively conserved sequence inhibit immune function in vitro and in vivo.</text>
</comment>
<comment type="domain">
    <text evidence="1">The YXXL motif is involved in determining the exact site of viral release at the surface of infected mononuclear cells and promotes endocytosis. YXXL and di-leucine endocytosis motifs interact directly or indirectly with the clathrin adapter complexes, opperate independently, and their activities are not additive.</text>
</comment>
<comment type="domain">
    <text evidence="1">The CD4-binding region is targeted by the antibody b12.</text>
</comment>
<comment type="PTM">
    <text evidence="1">Highly glycosylated by host. The high number of glycan on the protein is reffered to as 'glycan shield' because it contributes to hide protein sequence from adaptive immune system.</text>
</comment>
<comment type="PTM">
    <text evidence="1">Palmitoylation of the transmembrane protein and of Env polyprotein (prior to its proteolytic cleavage) is essential for their association with host cell membrane lipid rafts. Palmitoylation is therefore required for envelope trafficking to classical lipid rafts, but not for viral replication.</text>
</comment>
<comment type="PTM">
    <text evidence="1">Specific enzymatic cleavages in vivo yield mature proteins. Envelope glycoproteins are synthesized as an inactive precursor that is heavily N-glycosylated and processed likely by host cell furin in the Golgi to yield the mature SU and TM proteins. The cleavage site between SU and TM requires the minimal sequence [KR]-X-[KR]-R. About 2 of the 9 disulfide bonds of gp41 are reduced by P4HB/PDI, following binding to CD4 receptor.</text>
</comment>
<comment type="miscellaneous">
    <text evidence="1">Inhibitors targeting HIV-1 viral envelope proteins are used as antiretroviral drugs. Attachment of virions to the cell surface via non-specific interactions and CD4 binding can be blocked by inhibitors that include cyanovirin-N, cyclotriazadisulfonamide analogs, PRO 2000, TNX 355 and PRO 542. In addition, BMS 806 can block CD4-induced conformational changes. Env interactions with the coreceptor molecules can be targeted by CCR5 antagonists including SCH-D, maraviroc (UK 427857) and aplaviroc (GW 873140), and the CXCR4 antagonist AMD 070. Fusion of viral and cellular membranes can be inhibited by peptides such as enfuvirtide and tifuvirtide (T 1249). Resistance to inhibitors associated with mutations in Env are observed. Most of the time, single mutations confer only a modest reduction in drug susceptibility. Combination of several mutations is usually required to develop a high-level drug resistance.</text>
</comment>
<comment type="miscellaneous">
    <text evidence="1">HIV-1 lineages are divided in three main groups, M (for Major), O (for Outlier), and N (for New, or Non-M, Non-O). The vast majority of strains found worldwide belong to the group M. Group O seems to be endemic to and largely confined to Cameroon and neighboring countries in West Central Africa, where these viruses represent a small minority of HIV-1 strains. The group N is represented by a limited number of isolates from Cameroonian persons. The group M is further subdivided in 9 clades or subtypes (A to D, F to H, J and K).</text>
</comment>
<comment type="similarity">
    <text evidence="1">Belongs to the HIV-1 env protein family.</text>
</comment>
<comment type="online information" name="hivdb">
    <link uri="https://hivdb.stanford.edu"/>
    <text>HIV drug resistance database</text>
</comment>
<comment type="online information" name="HIV drug resistance mutations">
    <link uri="https://www.iasusa.org/hiv-drug-resistance/hiv-drug-resistance-mutations/"/>
</comment>
<feature type="signal peptide" evidence="1 3">
    <location>
        <begin position="1"/>
        <end position="33"/>
    </location>
</feature>
<feature type="chain" id="PRO_0000239475" description="Envelope glycoprotein gp160" evidence="1">
    <location>
        <begin position="34"/>
        <end position="868"/>
    </location>
</feature>
<feature type="chain" id="PRO_0000038390" description="Surface protein gp120" evidence="1">
    <location>
        <begin position="34"/>
        <end position="522"/>
    </location>
</feature>
<feature type="chain" id="PRO_0000038391" description="Transmembrane protein gp41" evidence="1">
    <location>
        <begin position="523"/>
        <end position="868"/>
    </location>
</feature>
<feature type="topological domain" description="Extracellular" evidence="1">
    <location>
        <begin position="34"/>
        <end position="696"/>
    </location>
</feature>
<feature type="transmembrane region" description="Helical" evidence="1">
    <location>
        <begin position="697"/>
        <end position="717"/>
    </location>
</feature>
<feature type="topological domain" description="Cytoplasmic" evidence="1">
    <location>
        <begin position="718"/>
        <end position="868"/>
    </location>
</feature>
<feature type="region of interest" description="V1" evidence="1">
    <location>
        <begin position="132"/>
        <end position="162"/>
    </location>
</feature>
<feature type="region of interest" description="V2" evidence="1">
    <location>
        <begin position="163"/>
        <end position="207"/>
    </location>
</feature>
<feature type="region of interest" description="V3" evidence="1">
    <location>
        <begin position="307"/>
        <end position="340"/>
    </location>
</feature>
<feature type="region of interest" description="CD4-binding loop" evidence="1">
    <location>
        <begin position="373"/>
        <end position="383"/>
    </location>
</feature>
<feature type="region of interest" description="V4" evidence="1">
    <location>
        <begin position="394"/>
        <end position="429"/>
    </location>
</feature>
<feature type="region of interest" description="V5">
    <location>
        <begin position="472"/>
        <end position="482"/>
    </location>
</feature>
<feature type="region of interest" description="V5" evidence="1">
    <location>
        <begin position="474"/>
        <end position="482"/>
    </location>
</feature>
<feature type="region of interest" description="Fusion peptide" evidence="1">
    <location>
        <begin position="523"/>
        <end position="544"/>
    </location>
</feature>
<feature type="region of interest" description="Immunosuppression" evidence="1">
    <location>
        <begin position="586"/>
        <end position="604"/>
    </location>
</feature>
<feature type="region of interest" description="MPER; binding to GalCer" evidence="1">
    <location>
        <begin position="674"/>
        <end position="695"/>
    </location>
</feature>
<feature type="region of interest" description="Disordered" evidence="2">
    <location>
        <begin position="731"/>
        <end position="755"/>
    </location>
</feature>
<feature type="coiled-coil region" evidence="1">
    <location>
        <begin position="645"/>
        <end position="679"/>
    </location>
</feature>
<feature type="short sequence motif" description="YXXL motif; contains endocytosis signal" evidence="1">
    <location>
        <begin position="724"/>
        <end position="727"/>
    </location>
</feature>
<feature type="short sequence motif" description="Di-leucine internalization motif" evidence="1">
    <location>
        <begin position="867"/>
        <end position="868"/>
    </location>
</feature>
<feature type="compositionally biased region" description="Basic and acidic residues" evidence="2">
    <location>
        <begin position="738"/>
        <end position="755"/>
    </location>
</feature>
<feature type="site" description="Cleavage; by host furin" evidence="1">
    <location>
        <begin position="522"/>
        <end position="523"/>
    </location>
</feature>
<feature type="lipid moiety-binding region" description="S-palmitoyl cysteine; by host" evidence="1">
    <location>
        <position position="776"/>
    </location>
</feature>
<feature type="glycosylation site" description="N-linked (GlcNAc...) asparagine; by host" evidence="1">
    <location>
        <position position="89"/>
    </location>
</feature>
<feature type="glycosylation site" description="N-linked (GlcNAc...) asparagine; by host" evidence="1">
    <location>
        <position position="131"/>
    </location>
</feature>
<feature type="glycosylation site" description="N-linked (GlcNAc...) asparagine; by host" evidence="1">
    <location>
        <position position="138"/>
    </location>
</feature>
<feature type="glycosylation site" description="N-linked (GlcNAc...) asparagine; by host" evidence="1">
    <location>
        <position position="139"/>
    </location>
</feature>
<feature type="glycosylation site" description="N-linked (GlcNAc...) asparagine; by host" evidence="1">
    <location>
        <position position="142"/>
    </location>
</feature>
<feature type="glycosylation site" description="N-linked (GlcNAc...) asparagine; by host" evidence="1">
    <location>
        <position position="162"/>
    </location>
</feature>
<feature type="glycosylation site" description="N-linked (GlcNAc...) asparagine; by host" evidence="1">
    <location>
        <position position="166"/>
    </location>
</feature>
<feature type="glycosylation site" description="N-linked (GlcNAc...) asparagine; by host" evidence="1">
    <location>
        <position position="195"/>
    </location>
</feature>
<feature type="glycosylation site" description="N-linked (GlcNAc...) asparagine; by host" evidence="1">
    <location>
        <position position="198"/>
    </location>
</feature>
<feature type="glycosylation site" description="N-linked (GlcNAc...) asparagine; by host" evidence="1">
    <location>
        <position position="208"/>
    </location>
</feature>
<feature type="glycosylation site" description="N-linked (GlcNAc...) asparagine; by host" evidence="1">
    <location>
        <position position="245"/>
    </location>
</feature>
<feature type="glycosylation site" description="N-linked (GlcNAc...) asparagine; by host" evidence="1">
    <location>
        <position position="252"/>
    </location>
</feature>
<feature type="glycosylation site" description="N-linked (GlcNAc...) asparagine; by host" evidence="1">
    <location>
        <position position="273"/>
    </location>
</feature>
<feature type="glycosylation site" description="N-linked (GlcNAc...) asparagine; by host" evidence="1">
    <location>
        <position position="287"/>
    </location>
</feature>
<feature type="glycosylation site" description="N-linked (GlcNAc...) asparagine; by host" evidence="1">
    <location>
        <position position="300"/>
    </location>
</feature>
<feature type="glycosylation site" description="N-linked (GlcNAc...) asparagine; by host" evidence="1">
    <location>
        <position position="306"/>
    </location>
</feature>
<feature type="glycosylation site" description="N-linked (GlcNAc...) asparagine; by host" evidence="1">
    <location>
        <position position="312"/>
    </location>
</feature>
<feature type="glycosylation site" description="N-linked (GlcNAc...) asparagine; by host" evidence="1">
    <location>
        <position position="342"/>
    </location>
</feature>
<feature type="glycosylation site" description="N-linked (GlcNAc...) asparagine; by host" evidence="1">
    <location>
        <position position="349"/>
    </location>
</feature>
<feature type="glycosylation site" description="N-linked (GlcNAc...) asparagine; by host" evidence="1">
    <location>
        <position position="365"/>
    </location>
</feature>
<feature type="glycosylation site" description="N-linked (GlcNAc...) asparagine; by host" evidence="1">
    <location>
        <position position="371"/>
    </location>
</feature>
<feature type="glycosylation site" description="N-linked (GlcNAc...) asparagine; by host" evidence="1">
    <location>
        <position position="395"/>
    </location>
</feature>
<feature type="glycosylation site" description="N-linked (GlcNAc...) asparagine; by host" evidence="1">
    <location>
        <position position="405"/>
    </location>
</feature>
<feature type="glycosylation site" description="N-linked (GlcNAc...) asparagine; by host" evidence="1">
    <location>
        <position position="409"/>
    </location>
</feature>
<feature type="glycosylation site" description="N-linked (GlcNAc...) asparagine; by host" evidence="1">
    <location>
        <position position="459"/>
    </location>
</feature>
<feature type="glycosylation site" description="N-linked (GlcNAc...) asparagine; by host" evidence="1">
    <location>
        <position position="473"/>
    </location>
</feature>
<feature type="glycosylation site" description="N-linked (GlcNAc...) asparagine; by host" evidence="1">
    <location>
        <position position="623"/>
    </location>
</feature>
<feature type="glycosylation site" description="N-linked (GlcNAc...) asparagine; by host" evidence="1">
    <location>
        <position position="628"/>
    </location>
</feature>
<feature type="glycosylation site" description="N-linked (GlcNAc...) asparagine; by host" evidence="1">
    <location>
        <position position="637"/>
    </location>
</feature>
<feature type="glycosylation site" description="N-linked (GlcNAc...) asparagine; by host" evidence="1">
    <location>
        <position position="649"/>
    </location>
</feature>
<feature type="disulfide bond" evidence="1">
    <location>
        <begin position="55"/>
        <end position="75"/>
    </location>
</feature>
<feature type="disulfide bond" evidence="1">
    <location>
        <begin position="120"/>
        <end position="216"/>
    </location>
</feature>
<feature type="disulfide bond" evidence="1">
    <location>
        <begin position="127"/>
        <end position="207"/>
    </location>
</feature>
<feature type="disulfide bond" evidence="1">
    <location>
        <begin position="132"/>
        <end position="163"/>
    </location>
</feature>
<feature type="disulfide bond" evidence="1">
    <location>
        <begin position="229"/>
        <end position="258"/>
    </location>
</feature>
<feature type="disulfide bond" evidence="1">
    <location>
        <begin position="239"/>
        <end position="250"/>
    </location>
</feature>
<feature type="disulfide bond" evidence="1">
    <location>
        <begin position="307"/>
        <end position="341"/>
    </location>
</feature>
<feature type="disulfide bond" evidence="1">
    <location>
        <begin position="387"/>
        <end position="456"/>
    </location>
</feature>
<feature type="disulfide bond" evidence="1">
    <location>
        <begin position="394"/>
        <end position="429"/>
    </location>
</feature>
<feature type="disulfide bond" evidence="1">
    <location>
        <begin position="610"/>
        <end position="616"/>
    </location>
</feature>
<reference key="1">
    <citation type="journal article" date="1986" name="Proc. Natl. Acad. Sci. U.S.A.">
        <title>Molecular cloning and primary nucleotide sequence analysis of a distinct human immunodeficiency virus isolate reveal significant divergence in its genomic sequences.</title>
        <authorList>
            <person name="Desai S.M."/>
            <person name="Kalyanaraman V.S."/>
            <person name="Casey J.M."/>
            <person name="Srinivasan A."/>
            <person name="Andersen P.R."/>
            <person name="Devare S.G."/>
        </authorList>
    </citation>
    <scope>NUCLEOTIDE SEQUENCE [GENOMIC RNA]</scope>
</reference>
<reference key="2">
    <citation type="journal article" date="1990" name="AIDS Res. Hum. Retroviruses">
        <title>Characterization of the secreted, native gp120 and gp160 of the human immunodeficiency virus type 1.</title>
        <authorList>
            <person name="Kalyanaraman V.S."/>
            <person name="Rodriguez V."/>
            <person name="Veronese F."/>
            <person name="Rahman R."/>
            <person name="Lusso P."/>
            <person name="DeVico A.L."/>
            <person name="Copeland T."/>
            <person name="Oroszlan S."/>
            <person name="Gallo R.C."/>
            <person name="Sarngadharan M.G."/>
        </authorList>
    </citation>
    <scope>PROTEIN SEQUENCE OF 34-43</scope>
</reference>
<reference key="3">
    <citation type="journal article" date="2003" name="APMIS">
        <title>Pathogens target DC-SIGN to influence their fate DC-SIGN functions as a pathogen receptor with broad specificity.</title>
        <authorList>
            <person name="Geijtenbeek T.B."/>
            <person name="van Kooyk Y."/>
        </authorList>
    </citation>
    <scope>REVIEW</scope>
</reference>
<reference key="4">
    <citation type="journal article" date="2003" name="Biochim. Biophys. Acta">
        <title>The HIV Env-mediated fusion reaction.</title>
        <authorList>
            <person name="Gallo S.A."/>
            <person name="Finnegan C.M."/>
            <person name="Viard M."/>
            <person name="Raviv Y."/>
            <person name="Dimitrov A."/>
            <person name="Rawat S.S."/>
            <person name="Puri A."/>
            <person name="Durell S."/>
            <person name="Blumenthal R."/>
        </authorList>
    </citation>
    <scope>REVIEW</scope>
</reference>
<reference key="5">
    <citation type="journal article" date="2005" name="Cell Death Differ.">
        <title>Mechanisms of apoptosis induction by the HIV-1 envelope.</title>
        <authorList>
            <person name="Perfettini J.-L."/>
            <person name="Castedo M."/>
            <person name="Roumier T."/>
            <person name="Andreau K."/>
            <person name="Nardacci R."/>
            <person name="Piacentini M."/>
            <person name="Kroemer G."/>
        </authorList>
    </citation>
    <scope>REVIEW</scope>
</reference>
<reference key="6">
    <citation type="journal article" date="2005" name="AIDS Res. Hum. Retroviruses">
        <title>V3: HIV's switch-hitter.</title>
        <authorList>
            <person name="Hartley O."/>
            <person name="Klasse P.J."/>
            <person name="Sattentau Q.J."/>
            <person name="Moore J.P."/>
        </authorList>
    </citation>
    <scope>REVIEW</scope>
</reference>
<reference key="7">
    <citation type="journal article" date="2005" name="Drugs">
        <title>Emerging drug targets for antiretroviral therapy.</title>
        <authorList>
            <person name="Reeves J.D."/>
            <person name="Piefer A.J."/>
        </authorList>
    </citation>
    <scope>REVIEW</scope>
</reference>
<reference key="8">
    <citation type="journal article" date="2006" name="EMBO J.">
        <title>HIV and the chemokine system: 10 years later.</title>
        <authorList>
            <person name="Lusso P."/>
        </authorList>
    </citation>
    <scope>REVIEW</scope>
</reference>
<evidence type="ECO:0000255" key="1">
    <source>
        <dbReference type="HAMAP-Rule" id="MF_04083"/>
    </source>
</evidence>
<evidence type="ECO:0000256" key="2">
    <source>
        <dbReference type="SAM" id="MobiDB-lite"/>
    </source>
</evidence>
<evidence type="ECO:0000269" key="3">
    <source>
    </source>
</evidence>
<organismHost>
    <name type="scientific">Homo sapiens</name>
    <name type="common">Human</name>
    <dbReference type="NCBI Taxonomy" id="9606"/>
</organismHost>
<name>ENV_HV1C4</name>
<proteinExistence type="evidence at protein level"/>